<evidence type="ECO:0000250" key="1">
    <source>
        <dbReference type="UniProtKB" id="Q5W726"/>
    </source>
</evidence>
<evidence type="ECO:0000255" key="2">
    <source>
        <dbReference type="PROSITE-ProRule" id="PRU00805"/>
    </source>
</evidence>
<evidence type="ECO:0000269" key="3">
    <source>
    </source>
</evidence>
<evidence type="ECO:0000269" key="4">
    <source>
    </source>
</evidence>
<evidence type="ECO:0000269" key="5">
    <source>
    </source>
</evidence>
<evidence type="ECO:0000269" key="6">
    <source>
    </source>
</evidence>
<evidence type="ECO:0000269" key="7">
    <source>
    </source>
</evidence>
<evidence type="ECO:0000303" key="8">
    <source>
    </source>
</evidence>
<evidence type="ECO:0000303" key="9">
    <source>
    </source>
</evidence>
<evidence type="ECO:0000303" key="10">
    <source>
    </source>
</evidence>
<evidence type="ECO:0000305" key="11"/>
<name>IDS3_HORVU</name>
<sequence length="339" mass="37732">MENILHATPAHVSLPESFVFASDKVPPATKAVVSLPIIDLSCGRDEVRRSILEAGKELGFFQVVNHGVSKQVMRDMEGMCEQFFHLPAADKASLYSEERHKPNRLFSGATYDTGGEKYWRDCLRLACPFPVDDSINEWPDTPKGLRDVIEKFTSQTRDVGKELLRLLCEGMGIQADYFEGDLSGGNVILNINHYPSCPNPDKALGQPPHCDRNLITLLLPGAVNGLEVSYKGDWIKVDPAPNAFVVNFGQQLEVVTNGLLKSIEHRAMTNSALARTSVATFIMPTQECLIGPAKEFLSKENPPCYRTTMFRDFMRIYNVVKLGSSLNLTTNLKNVQKEI</sequence>
<dbReference type="EC" id="1.14.11.24" evidence="4"/>
<dbReference type="EMBL" id="AB024058">
    <property type="protein sequence ID" value="BAA75493.1"/>
    <property type="molecule type" value="mRNA"/>
</dbReference>
<dbReference type="EMBL" id="AB024007">
    <property type="protein sequence ID" value="BAB07798.1"/>
    <property type="molecule type" value="Genomic_DNA"/>
</dbReference>
<dbReference type="EMBL" id="D37796">
    <property type="protein sequence ID" value="BAA07042.1"/>
    <property type="molecule type" value="Genomic_DNA"/>
</dbReference>
<dbReference type="PIR" id="T05743">
    <property type="entry name" value="T05743"/>
</dbReference>
<dbReference type="PIR" id="T05903">
    <property type="entry name" value="T05903"/>
</dbReference>
<dbReference type="SMR" id="Q40062"/>
<dbReference type="KEGG" id="ag:BAA75493"/>
<dbReference type="BioCyc" id="MetaCyc:MONOMER-13953"/>
<dbReference type="BRENDA" id="1.14.11.24">
    <property type="organism ID" value="2687"/>
</dbReference>
<dbReference type="GO" id="GO:0005737">
    <property type="term" value="C:cytoplasm"/>
    <property type="evidence" value="ECO:0007669"/>
    <property type="project" value="UniProtKB-SubCell"/>
</dbReference>
<dbReference type="GO" id="GO:0033760">
    <property type="term" value="F:2'-deoxymugineic-acid 2'-dioxygenase activity"/>
    <property type="evidence" value="ECO:0000314"/>
    <property type="project" value="UniProtKB"/>
</dbReference>
<dbReference type="GO" id="GO:0031418">
    <property type="term" value="F:L-ascorbic acid binding"/>
    <property type="evidence" value="ECO:0007669"/>
    <property type="project" value="UniProtKB-KW"/>
</dbReference>
<dbReference type="GO" id="GO:0046872">
    <property type="term" value="F:metal ion binding"/>
    <property type="evidence" value="ECO:0007669"/>
    <property type="project" value="UniProtKB-KW"/>
</dbReference>
<dbReference type="GO" id="GO:0010041">
    <property type="term" value="P:response to iron(III) ion"/>
    <property type="evidence" value="ECO:0000314"/>
    <property type="project" value="UniProtKB"/>
</dbReference>
<dbReference type="FunFam" id="2.60.120.330:FF:000041">
    <property type="entry name" value="Hyoscyamine 6-dioxygenase"/>
    <property type="match status" value="1"/>
</dbReference>
<dbReference type="Gene3D" id="2.60.120.330">
    <property type="entry name" value="B-lactam Antibiotic, Isopenicillin N Synthase, Chain"/>
    <property type="match status" value="1"/>
</dbReference>
<dbReference type="InterPro" id="IPR026992">
    <property type="entry name" value="DIOX_N"/>
</dbReference>
<dbReference type="InterPro" id="IPR044861">
    <property type="entry name" value="IPNS-like_FE2OG_OXY"/>
</dbReference>
<dbReference type="InterPro" id="IPR027443">
    <property type="entry name" value="IPNS-like_sf"/>
</dbReference>
<dbReference type="InterPro" id="IPR005123">
    <property type="entry name" value="Oxoglu/Fe-dep_dioxygenase_dom"/>
</dbReference>
<dbReference type="InterPro" id="IPR050295">
    <property type="entry name" value="Plant_2OG-oxidoreductases"/>
</dbReference>
<dbReference type="PANTHER" id="PTHR47991">
    <property type="entry name" value="OXOGLUTARATE/IRON-DEPENDENT DIOXYGENASE"/>
    <property type="match status" value="1"/>
</dbReference>
<dbReference type="Pfam" id="PF03171">
    <property type="entry name" value="2OG-FeII_Oxy"/>
    <property type="match status" value="1"/>
</dbReference>
<dbReference type="Pfam" id="PF14226">
    <property type="entry name" value="DIOX_N"/>
    <property type="match status" value="1"/>
</dbReference>
<dbReference type="SUPFAM" id="SSF51197">
    <property type="entry name" value="Clavaminate synthase-like"/>
    <property type="match status" value="1"/>
</dbReference>
<dbReference type="PROSITE" id="PS51471">
    <property type="entry name" value="FE2OG_OXY"/>
    <property type="match status" value="1"/>
</dbReference>
<gene>
    <name evidence="8 10" type="primary">IDS3</name>
</gene>
<organism>
    <name type="scientific">Hordeum vulgare</name>
    <name type="common">Barley</name>
    <dbReference type="NCBI Taxonomy" id="4513"/>
    <lineage>
        <taxon>Eukaryota</taxon>
        <taxon>Viridiplantae</taxon>
        <taxon>Streptophyta</taxon>
        <taxon>Embryophyta</taxon>
        <taxon>Tracheophyta</taxon>
        <taxon>Spermatophyta</taxon>
        <taxon>Magnoliopsida</taxon>
        <taxon>Liliopsida</taxon>
        <taxon>Poales</taxon>
        <taxon>Poaceae</taxon>
        <taxon>BOP clade</taxon>
        <taxon>Pooideae</taxon>
        <taxon>Triticodae</taxon>
        <taxon>Triticeae</taxon>
        <taxon>Hordeinae</taxon>
        <taxon>Hordeum</taxon>
    </lineage>
</organism>
<reference key="1">
    <citation type="journal article" date="1993" name="Plant Cell Physiol.">
        <title>Expression of a gene specific for iron deficiency (Ids3) in the roots of Hordeum vulgare.</title>
        <authorList>
            <person name="Nakanishi H."/>
            <person name="Okumura N."/>
            <person name="Umehara Y."/>
            <person name="Nishizawa N.-K."/>
            <person name="Chino M."/>
            <person name="Mori S."/>
        </authorList>
    </citation>
    <scope>NUCLEOTIDE SEQUENCE [MRNA]</scope>
    <scope>INDUCTION</scope>
    <source>
        <strain>cv. Ehimehadaka No.1</strain>
        <tissue>Root</tissue>
    </source>
</reference>
<reference key="2">
    <citation type="journal article" date="2000" name="Plant Mol. Biol.">
        <title>Two dioxygenase genes, Ids3 and Ids2, from Hordeum vulgare are involved in the biosynthesis of mugineic acid family phytosiderophores.</title>
        <authorList>
            <person name="Nakanishi H."/>
            <person name="Yamaguchi H."/>
            <person name="Sasakuma T."/>
            <person name="Nishizawa N.K."/>
            <person name="Mori S."/>
        </authorList>
    </citation>
    <scope>NUCLEOTIDE SEQUENCE [GENOMIC DNA / MRNA]</scope>
    <scope>FUNCTION</scope>
    <scope>INDUCTION BY IRON DEFICIENCY</scope>
    <source>
        <strain>cv. Igri</strain>
        <strain>cv. NK 1558</strain>
        <tissue>Root</tissue>
    </source>
</reference>
<reference key="3">
    <citation type="journal article" date="1998" name="Plant Physiol.">
        <title>Formate dehydrogenase, an enzyme of anaerobic metabolism, is induced by iron deficiency in barley roots.</title>
        <authorList>
            <person name="Suzuki K."/>
            <person name="Itai R."/>
            <person name="Suzuki K."/>
            <person name="Nakanishi H."/>
            <person name="Nishizawa N.K."/>
            <person name="Yoshimura E."/>
            <person name="Mori S."/>
        </authorList>
    </citation>
    <scope>PROTEIN SEQUENCE OF 2-12; 80-97 AND 172-191</scope>
    <scope>INDUCTION</scope>
</reference>
<reference key="4">
    <citation type="journal article" date="2001" name="Planta">
        <title>In vivo evidence that Ids3 from Hordeum vulgare encodes a dioxygenase that converts 2'-deoxymugineic acid to mugineic acid in transgenic rice.</title>
        <authorList>
            <person name="Kobayashi T."/>
            <person name="Nakanishi H."/>
            <person name="Takahashi M."/>
            <person name="Kawasaki S."/>
            <person name="Nishizawa N.-K."/>
            <person name="Mori S."/>
        </authorList>
    </citation>
    <scope>FUNCTION</scope>
    <scope>INDUCTION</scope>
    <scope>CATALYTIC ACTIVITY</scope>
</reference>
<reference key="5">
    <citation type="journal article" date="2007" name="Plant Physiol.">
        <title>Increased abundance of proteins involved in phytosiderophore production in boron-tolerant barley.</title>
        <authorList>
            <person name="Patterson J."/>
            <person name="Ford K."/>
            <person name="Cassin A."/>
            <person name="Natera S."/>
            <person name="Bacic A."/>
        </authorList>
    </citation>
    <scope>FUNCTION</scope>
</reference>
<keyword id="KW-0963">Cytoplasm</keyword>
<keyword id="KW-0223">Dioxygenase</keyword>
<keyword id="KW-0903">Direct protein sequencing</keyword>
<keyword id="KW-0408">Iron</keyword>
<keyword id="KW-0479">Metal-binding</keyword>
<keyword id="KW-0560">Oxidoreductase</keyword>
<keyword id="KW-0847">Vitamin C</keyword>
<proteinExistence type="evidence at protein level"/>
<comment type="function">
    <text evidence="3 4 5">Involved in the biosynthesis of mugineic acid family of phytosiderophores. Hydroxylates the C-2' positions of 2'-deoxymugineic acid (DMA) and 3-epihydroxymugineic acid (epiHDMA). May be involved in boron tolerance.</text>
</comment>
<comment type="catalytic activity">
    <reaction evidence="4">
        <text>2'-deoxymugineate + 2-oxoglutarate + O2 = mugineate + succinate + CO2</text>
        <dbReference type="Rhea" id="RHEA:12200"/>
        <dbReference type="ChEBI" id="CHEBI:15379"/>
        <dbReference type="ChEBI" id="CHEBI:16526"/>
        <dbReference type="ChEBI" id="CHEBI:16810"/>
        <dbReference type="ChEBI" id="CHEBI:30031"/>
        <dbReference type="ChEBI" id="CHEBI:58487"/>
        <dbReference type="ChEBI" id="CHEBI:77826"/>
        <dbReference type="EC" id="1.14.11.24"/>
    </reaction>
    <physiologicalReaction direction="left-to-right" evidence="4">
        <dbReference type="Rhea" id="RHEA:12201"/>
    </physiologicalReaction>
</comment>
<comment type="cofactor">
    <cofactor evidence="2">
        <name>Fe(2+)</name>
        <dbReference type="ChEBI" id="CHEBI:29033"/>
    </cofactor>
    <text evidence="2">Binds 1 Fe(2+) ion per subunit.</text>
</comment>
<comment type="cofactor">
    <cofactor evidence="1">
        <name>L-ascorbate</name>
        <dbReference type="ChEBI" id="CHEBI:38290"/>
    </cofactor>
</comment>
<comment type="subcellular location">
    <subcellularLocation>
        <location evidence="11">Cytoplasm</location>
    </subcellularLocation>
</comment>
<comment type="induction">
    <text evidence="3 4 6 7">Up-regulated by iron deficiency and down-regulated by iron. Not induced by anaerobic conditions.</text>
</comment>
<comment type="PTM">
    <text>The N-terminus is blocked.</text>
</comment>
<comment type="similarity">
    <text evidence="11">Belongs to the iron/ascorbate-dependent oxidoreductase family.</text>
</comment>
<accession>Q40062</accession>
<accession>Q40063</accession>
<accession>Q9LU11</accession>
<protein>
    <recommendedName>
        <fullName evidence="9">2'-deoxymugineic-acid 2'-dioxygenase</fullName>
        <ecNumber evidence="4">1.14.11.24</ecNumber>
    </recommendedName>
    <alternativeName>
        <fullName evidence="8 10">Protein iron deficiency-specific 3</fullName>
    </alternativeName>
</protein>
<feature type="chain" id="PRO_0000389553" description="2'-deoxymugineic-acid 2'-dioxygenase">
    <location>
        <begin position="1"/>
        <end position="339"/>
    </location>
</feature>
<feature type="domain" description="Fe2OG dioxygenase" evidence="2">
    <location>
        <begin position="184"/>
        <end position="284"/>
    </location>
</feature>
<feature type="binding site" evidence="2">
    <location>
        <position position="209"/>
    </location>
    <ligand>
        <name>Fe cation</name>
        <dbReference type="ChEBI" id="CHEBI:24875"/>
    </ligand>
</feature>
<feature type="binding site" evidence="2">
    <location>
        <position position="211"/>
    </location>
    <ligand>
        <name>Fe cation</name>
        <dbReference type="ChEBI" id="CHEBI:24875"/>
    </ligand>
</feature>
<feature type="binding site" evidence="2">
    <location>
        <position position="265"/>
    </location>
    <ligand>
        <name>Fe cation</name>
        <dbReference type="ChEBI" id="CHEBI:24875"/>
    </ligand>
</feature>
<feature type="binding site" evidence="2">
    <location>
        <position position="275"/>
    </location>
    <ligand>
        <name>2-oxoglutarate</name>
        <dbReference type="ChEBI" id="CHEBI:16810"/>
    </ligand>
</feature>
<feature type="sequence variant" description="In strain: cv. Ehimehadaka No.1.">
    <original>H</original>
    <variation>P</variation>
    <location>
        <position position="11"/>
    </location>
</feature>
<feature type="sequence variant" description="In strain: cv. Igri.">
    <original>K</original>
    <variation>R</variation>
    <location>
        <position position="117"/>
    </location>
</feature>
<feature type="sequence variant" description="In strain: cv. Ehimehadaka No.1 and cv. Igri.">
    <original>Q</original>
    <variation>R</variation>
    <location>
        <position position="174"/>
    </location>
</feature>
<feature type="sequence variant" description="In strain: cv. Igri.">
    <original>K</original>
    <variation>R</variation>
    <location>
        <position position="261"/>
    </location>
</feature>
<feature type="sequence variant" description="In strain: cv. Igri.">
    <original>A</original>
    <variation>V</variation>
    <location>
        <position position="272"/>
    </location>
</feature>
<feature type="sequence variant" description="In strain: cv. Igri.">
    <original>K</original>
    <variation>E</variation>
    <location>
        <position position="299"/>
    </location>
</feature>
<feature type="sequence variant" description="In strain: cv. Igri.">
    <original>T</original>
    <variation>I</variation>
    <location>
        <position position="308"/>
    </location>
</feature>